<feature type="chain" id="PRO_0000206523" description="Inner membrane-spanning protein YciB">
    <location>
        <begin position="1"/>
        <end position="204"/>
    </location>
</feature>
<feature type="transmembrane region" description="Helical" evidence="1">
    <location>
        <begin position="3"/>
        <end position="23"/>
    </location>
</feature>
<feature type="transmembrane region" description="Helical" evidence="1">
    <location>
        <begin position="45"/>
        <end position="65"/>
    </location>
</feature>
<feature type="transmembrane region" description="Helical" evidence="1">
    <location>
        <begin position="70"/>
        <end position="90"/>
    </location>
</feature>
<feature type="transmembrane region" description="Helical" evidence="1">
    <location>
        <begin position="107"/>
        <end position="127"/>
    </location>
</feature>
<feature type="transmembrane region" description="Helical" evidence="1">
    <location>
        <begin position="145"/>
        <end position="165"/>
    </location>
</feature>
<feature type="transmembrane region" description="Helical" evidence="1">
    <location>
        <begin position="168"/>
        <end position="188"/>
    </location>
</feature>
<dbReference type="EMBL" id="AE007869">
    <property type="status" value="NOT_ANNOTATED_CDS"/>
    <property type="molecule type" value="Genomic_DNA"/>
</dbReference>
<dbReference type="PIR" id="AC2907">
    <property type="entry name" value="AC2907"/>
</dbReference>
<dbReference type="STRING" id="176299.Atu2692"/>
<dbReference type="eggNOG" id="COG2917">
    <property type="taxonomic scope" value="Bacteria"/>
</dbReference>
<dbReference type="Proteomes" id="UP000000813">
    <property type="component" value="Chromosome circular"/>
</dbReference>
<dbReference type="GO" id="GO:0005886">
    <property type="term" value="C:plasma membrane"/>
    <property type="evidence" value="ECO:0007669"/>
    <property type="project" value="UniProtKB-SubCell"/>
</dbReference>
<dbReference type="HAMAP" id="MF_00189">
    <property type="entry name" value="YciB"/>
    <property type="match status" value="1"/>
</dbReference>
<dbReference type="InterPro" id="IPR006008">
    <property type="entry name" value="YciB"/>
</dbReference>
<dbReference type="NCBIfam" id="TIGR00997">
    <property type="entry name" value="ispZ"/>
    <property type="match status" value="1"/>
</dbReference>
<dbReference type="NCBIfam" id="NF001323">
    <property type="entry name" value="PRK00259.1-1"/>
    <property type="match status" value="1"/>
</dbReference>
<dbReference type="PANTHER" id="PTHR36917:SF1">
    <property type="entry name" value="INNER MEMBRANE-SPANNING PROTEIN YCIB"/>
    <property type="match status" value="1"/>
</dbReference>
<dbReference type="PANTHER" id="PTHR36917">
    <property type="entry name" value="INTRACELLULAR SEPTATION PROTEIN A-RELATED"/>
    <property type="match status" value="1"/>
</dbReference>
<dbReference type="Pfam" id="PF04279">
    <property type="entry name" value="IspA"/>
    <property type="match status" value="1"/>
</dbReference>
<sequence>MVAEISPLLKFVLELGPLMVFFFANSRGEWLASTFPVLTEFGGPIFIATGLFMIATATALTVSWILTRKLPIMPLISGIVVFVFGALTLWLQNDTFIKMKPTIVNTLFGVILLGGLFFGQSLLGYVFNSAFKLTDEGWRKLTLRWGVFFLFLAVLNEVVWRMFTTDTWVAFKVWGTMPITIIFTMAQMPFVMRHSVEPLGKDEK</sequence>
<evidence type="ECO:0000255" key="1">
    <source>
        <dbReference type="HAMAP-Rule" id="MF_00189"/>
    </source>
</evidence>
<protein>
    <recommendedName>
        <fullName evidence="1">Inner membrane-spanning protein YciB</fullName>
    </recommendedName>
</protein>
<comment type="function">
    <text evidence="1">Plays a role in cell envelope biogenesis, maintenance of cell envelope integrity and membrane homeostasis.</text>
</comment>
<comment type="subcellular location">
    <subcellularLocation>
        <location evidence="1">Cell inner membrane</location>
        <topology evidence="1">Multi-pass membrane protein</topology>
    </subcellularLocation>
</comment>
<comment type="similarity">
    <text evidence="1">Belongs to the YciB family.</text>
</comment>
<organism>
    <name type="scientific">Agrobacterium fabrum (strain C58 / ATCC 33970)</name>
    <name type="common">Agrobacterium tumefaciens (strain C58)</name>
    <dbReference type="NCBI Taxonomy" id="176299"/>
    <lineage>
        <taxon>Bacteria</taxon>
        <taxon>Pseudomonadati</taxon>
        <taxon>Pseudomonadota</taxon>
        <taxon>Alphaproteobacteria</taxon>
        <taxon>Hyphomicrobiales</taxon>
        <taxon>Rhizobiaceae</taxon>
        <taxon>Rhizobium/Agrobacterium group</taxon>
        <taxon>Agrobacterium</taxon>
        <taxon>Agrobacterium tumefaciens complex</taxon>
    </lineage>
</organism>
<keyword id="KW-0997">Cell inner membrane</keyword>
<keyword id="KW-1003">Cell membrane</keyword>
<keyword id="KW-0472">Membrane</keyword>
<keyword id="KW-1185">Reference proteome</keyword>
<keyword id="KW-0812">Transmembrane</keyword>
<keyword id="KW-1133">Transmembrane helix</keyword>
<gene>
    <name evidence="1" type="primary">yciB</name>
    <name type="ordered locus">Atu2692</name>
    <name type="ORF">AGR_C_4880.1</name>
</gene>
<accession>Q8UC06</accession>
<name>YCIB_AGRFC</name>
<reference key="1">
    <citation type="journal article" date="2001" name="Science">
        <title>The genome of the natural genetic engineer Agrobacterium tumefaciens C58.</title>
        <authorList>
            <person name="Wood D.W."/>
            <person name="Setubal J.C."/>
            <person name="Kaul R."/>
            <person name="Monks D.E."/>
            <person name="Kitajima J.P."/>
            <person name="Okura V.K."/>
            <person name="Zhou Y."/>
            <person name="Chen L."/>
            <person name="Wood G.E."/>
            <person name="Almeida N.F. Jr."/>
            <person name="Woo L."/>
            <person name="Chen Y."/>
            <person name="Paulsen I.T."/>
            <person name="Eisen J.A."/>
            <person name="Karp P.D."/>
            <person name="Bovee D. Sr."/>
            <person name="Chapman P."/>
            <person name="Clendenning J."/>
            <person name="Deatherage G."/>
            <person name="Gillet W."/>
            <person name="Grant C."/>
            <person name="Kutyavin T."/>
            <person name="Levy R."/>
            <person name="Li M.-J."/>
            <person name="McClelland E."/>
            <person name="Palmieri A."/>
            <person name="Raymond C."/>
            <person name="Rouse G."/>
            <person name="Saenphimmachak C."/>
            <person name="Wu Z."/>
            <person name="Romero P."/>
            <person name="Gordon D."/>
            <person name="Zhang S."/>
            <person name="Yoo H."/>
            <person name="Tao Y."/>
            <person name="Biddle P."/>
            <person name="Jung M."/>
            <person name="Krespan W."/>
            <person name="Perry M."/>
            <person name="Gordon-Kamm B."/>
            <person name="Liao L."/>
            <person name="Kim S."/>
            <person name="Hendrick C."/>
            <person name="Zhao Z.-Y."/>
            <person name="Dolan M."/>
            <person name="Chumley F."/>
            <person name="Tingey S.V."/>
            <person name="Tomb J.-F."/>
            <person name="Gordon M.P."/>
            <person name="Olson M.V."/>
            <person name="Nester E.W."/>
        </authorList>
    </citation>
    <scope>NUCLEOTIDE SEQUENCE [LARGE SCALE GENOMIC DNA]</scope>
    <source>
        <strain>C58 / ATCC 33970</strain>
    </source>
</reference>
<reference key="2">
    <citation type="journal article" date="2001" name="Science">
        <title>Genome sequence of the plant pathogen and biotechnology agent Agrobacterium tumefaciens C58.</title>
        <authorList>
            <person name="Goodner B."/>
            <person name="Hinkle G."/>
            <person name="Gattung S."/>
            <person name="Miller N."/>
            <person name="Blanchard M."/>
            <person name="Qurollo B."/>
            <person name="Goldman B.S."/>
            <person name="Cao Y."/>
            <person name="Askenazi M."/>
            <person name="Halling C."/>
            <person name="Mullin L."/>
            <person name="Houmiel K."/>
            <person name="Gordon J."/>
            <person name="Vaudin M."/>
            <person name="Iartchouk O."/>
            <person name="Epp A."/>
            <person name="Liu F."/>
            <person name="Wollam C."/>
            <person name="Allinger M."/>
            <person name="Doughty D."/>
            <person name="Scott C."/>
            <person name="Lappas C."/>
            <person name="Markelz B."/>
            <person name="Flanagan C."/>
            <person name="Crowell C."/>
            <person name="Gurson J."/>
            <person name="Lomo C."/>
            <person name="Sear C."/>
            <person name="Strub G."/>
            <person name="Cielo C."/>
            <person name="Slater S."/>
        </authorList>
    </citation>
    <scope>NUCLEOTIDE SEQUENCE [LARGE SCALE GENOMIC DNA]</scope>
    <source>
        <strain>C58 / ATCC 33970</strain>
    </source>
</reference>
<proteinExistence type="inferred from homology"/>